<feature type="chain" id="PRO_1000021389" description="Ribonuclease P protein component">
    <location>
        <begin position="1"/>
        <end position="116"/>
    </location>
</feature>
<evidence type="ECO:0000255" key="1">
    <source>
        <dbReference type="HAMAP-Rule" id="MF_00227"/>
    </source>
</evidence>
<accession>Q3AG60</accession>
<organism>
    <name type="scientific">Carboxydothermus hydrogenoformans (strain ATCC BAA-161 / DSM 6008 / Z-2901)</name>
    <dbReference type="NCBI Taxonomy" id="246194"/>
    <lineage>
        <taxon>Bacteria</taxon>
        <taxon>Bacillati</taxon>
        <taxon>Bacillota</taxon>
        <taxon>Clostridia</taxon>
        <taxon>Thermoanaerobacterales</taxon>
        <taxon>Thermoanaerobacteraceae</taxon>
        <taxon>Carboxydothermus</taxon>
    </lineage>
</organism>
<proteinExistence type="inferred from homology"/>
<sequence length="116" mass="13909">MNKCRFLSKNEEYRNIYQNGRSIASRYFVVYYLKNEDEKKLPSFGISVSKKIGKAVVRNRLRRRLKEALKRLCFEFLPGYDYVIIPRLSFKNDEFSVILEQLLYIIKLMKRSIDNA</sequence>
<comment type="function">
    <text evidence="1">RNaseP catalyzes the removal of the 5'-leader sequence from pre-tRNA to produce the mature 5'-terminus. It can also cleave other RNA substrates such as 4.5S RNA. The protein component plays an auxiliary but essential role in vivo by binding to the 5'-leader sequence and broadening the substrate specificity of the ribozyme.</text>
</comment>
<comment type="catalytic activity">
    <reaction evidence="1">
        <text>Endonucleolytic cleavage of RNA, removing 5'-extranucleotides from tRNA precursor.</text>
        <dbReference type="EC" id="3.1.26.5"/>
    </reaction>
</comment>
<comment type="subunit">
    <text evidence="1">Consists of a catalytic RNA component (M1 or rnpB) and a protein subunit.</text>
</comment>
<comment type="similarity">
    <text evidence="1">Belongs to the RnpA family.</text>
</comment>
<keyword id="KW-0255">Endonuclease</keyword>
<keyword id="KW-0378">Hydrolase</keyword>
<keyword id="KW-0540">Nuclease</keyword>
<keyword id="KW-1185">Reference proteome</keyword>
<keyword id="KW-0694">RNA-binding</keyword>
<keyword id="KW-0819">tRNA processing</keyword>
<name>RNPA_CARHZ</name>
<dbReference type="EC" id="3.1.26.5" evidence="1"/>
<dbReference type="EMBL" id="CP000141">
    <property type="protein sequence ID" value="ABB16116.1"/>
    <property type="molecule type" value="Genomic_DNA"/>
</dbReference>
<dbReference type="RefSeq" id="WP_011342950.1">
    <property type="nucleotide sequence ID" value="NC_007503.1"/>
</dbReference>
<dbReference type="SMR" id="Q3AG60"/>
<dbReference type="FunCoup" id="Q3AG60">
    <property type="interactions" value="231"/>
</dbReference>
<dbReference type="STRING" id="246194.CHY_0002"/>
<dbReference type="KEGG" id="chy:CHY_0002"/>
<dbReference type="eggNOG" id="COG0594">
    <property type="taxonomic scope" value="Bacteria"/>
</dbReference>
<dbReference type="HOGENOM" id="CLU_117179_9_1_9"/>
<dbReference type="InParanoid" id="Q3AG60"/>
<dbReference type="OrthoDB" id="9810867at2"/>
<dbReference type="Proteomes" id="UP000002706">
    <property type="component" value="Chromosome"/>
</dbReference>
<dbReference type="GO" id="GO:0030677">
    <property type="term" value="C:ribonuclease P complex"/>
    <property type="evidence" value="ECO:0007669"/>
    <property type="project" value="TreeGrafter"/>
</dbReference>
<dbReference type="GO" id="GO:0042781">
    <property type="term" value="F:3'-tRNA processing endoribonuclease activity"/>
    <property type="evidence" value="ECO:0007669"/>
    <property type="project" value="TreeGrafter"/>
</dbReference>
<dbReference type="GO" id="GO:0004526">
    <property type="term" value="F:ribonuclease P activity"/>
    <property type="evidence" value="ECO:0007669"/>
    <property type="project" value="UniProtKB-UniRule"/>
</dbReference>
<dbReference type="GO" id="GO:0000049">
    <property type="term" value="F:tRNA binding"/>
    <property type="evidence" value="ECO:0007669"/>
    <property type="project" value="UniProtKB-UniRule"/>
</dbReference>
<dbReference type="GO" id="GO:0001682">
    <property type="term" value="P:tRNA 5'-leader removal"/>
    <property type="evidence" value="ECO:0007669"/>
    <property type="project" value="UniProtKB-UniRule"/>
</dbReference>
<dbReference type="Gene3D" id="3.30.230.10">
    <property type="match status" value="1"/>
</dbReference>
<dbReference type="HAMAP" id="MF_00227">
    <property type="entry name" value="RNase_P"/>
    <property type="match status" value="1"/>
</dbReference>
<dbReference type="InterPro" id="IPR020568">
    <property type="entry name" value="Ribosomal_Su5_D2-typ_SF"/>
</dbReference>
<dbReference type="InterPro" id="IPR014721">
    <property type="entry name" value="Ribsml_uS5_D2-typ_fold_subgr"/>
</dbReference>
<dbReference type="InterPro" id="IPR000100">
    <property type="entry name" value="RNase_P"/>
</dbReference>
<dbReference type="InterPro" id="IPR020539">
    <property type="entry name" value="RNase_P_CS"/>
</dbReference>
<dbReference type="NCBIfam" id="TIGR00188">
    <property type="entry name" value="rnpA"/>
    <property type="match status" value="1"/>
</dbReference>
<dbReference type="PANTHER" id="PTHR33992">
    <property type="entry name" value="RIBONUCLEASE P PROTEIN COMPONENT"/>
    <property type="match status" value="1"/>
</dbReference>
<dbReference type="PANTHER" id="PTHR33992:SF1">
    <property type="entry name" value="RIBONUCLEASE P PROTEIN COMPONENT"/>
    <property type="match status" value="1"/>
</dbReference>
<dbReference type="Pfam" id="PF00825">
    <property type="entry name" value="Ribonuclease_P"/>
    <property type="match status" value="1"/>
</dbReference>
<dbReference type="SUPFAM" id="SSF54211">
    <property type="entry name" value="Ribosomal protein S5 domain 2-like"/>
    <property type="match status" value="1"/>
</dbReference>
<dbReference type="PROSITE" id="PS00648">
    <property type="entry name" value="RIBONUCLEASE_P"/>
    <property type="match status" value="1"/>
</dbReference>
<gene>
    <name evidence="1" type="primary">rnpA</name>
    <name type="ordered locus">CHY_0002</name>
</gene>
<protein>
    <recommendedName>
        <fullName evidence="1">Ribonuclease P protein component</fullName>
        <shortName evidence="1">RNase P protein</shortName>
        <shortName evidence="1">RNaseP protein</shortName>
        <ecNumber evidence="1">3.1.26.5</ecNumber>
    </recommendedName>
    <alternativeName>
        <fullName evidence="1">Protein C5</fullName>
    </alternativeName>
</protein>
<reference key="1">
    <citation type="journal article" date="2005" name="PLoS Genet.">
        <title>Life in hot carbon monoxide: the complete genome sequence of Carboxydothermus hydrogenoformans Z-2901.</title>
        <authorList>
            <person name="Wu M."/>
            <person name="Ren Q."/>
            <person name="Durkin A.S."/>
            <person name="Daugherty S.C."/>
            <person name="Brinkac L.M."/>
            <person name="Dodson R.J."/>
            <person name="Madupu R."/>
            <person name="Sullivan S.A."/>
            <person name="Kolonay J.F."/>
            <person name="Nelson W.C."/>
            <person name="Tallon L.J."/>
            <person name="Jones K.M."/>
            <person name="Ulrich L.E."/>
            <person name="Gonzalez J.M."/>
            <person name="Zhulin I.B."/>
            <person name="Robb F.T."/>
            <person name="Eisen J.A."/>
        </authorList>
    </citation>
    <scope>NUCLEOTIDE SEQUENCE [LARGE SCALE GENOMIC DNA]</scope>
    <source>
        <strain>ATCC BAA-161 / DSM 6008 / Z-2901</strain>
    </source>
</reference>